<keyword id="KW-1185">Reference proteome</keyword>
<keyword id="KW-0687">Ribonucleoprotein</keyword>
<keyword id="KW-0689">Ribosomal protein</keyword>
<keyword id="KW-0694">RNA-binding</keyword>
<keyword id="KW-0699">rRNA-binding</keyword>
<organism>
    <name type="scientific">Shewanella oneidensis (strain ATCC 700550 / JCM 31522 / CIP 106686 / LMG 19005 / NCIMB 14063 / MR-1)</name>
    <dbReference type="NCBI Taxonomy" id="211586"/>
    <lineage>
        <taxon>Bacteria</taxon>
        <taxon>Pseudomonadati</taxon>
        <taxon>Pseudomonadota</taxon>
        <taxon>Gammaproteobacteria</taxon>
        <taxon>Alteromonadales</taxon>
        <taxon>Shewanellaceae</taxon>
        <taxon>Shewanella</taxon>
    </lineage>
</organism>
<feature type="chain" id="PRO_0000130193" description="Small ribosomal subunit protein uS3">
    <location>
        <begin position="1"/>
        <end position="230"/>
    </location>
</feature>
<feature type="domain" description="KH type-2" evidence="1">
    <location>
        <begin position="39"/>
        <end position="107"/>
    </location>
</feature>
<comment type="function">
    <text evidence="1">Binds the lower part of the 30S subunit head. Binds mRNA in the 70S ribosome, positioning it for translation.</text>
</comment>
<comment type="subunit">
    <text evidence="1">Part of the 30S ribosomal subunit. Forms a tight complex with proteins S10 and S14.</text>
</comment>
<comment type="similarity">
    <text evidence="1">Belongs to the universal ribosomal protein uS3 family.</text>
</comment>
<sequence>MGQKVHPNGIRLGITKPWISTWYADKSDYANNLNSDWEVRKYLADKLQAASVSKIVIERPAKSIRVTIHTARPGVVIGKKGEDVEVLRAAVSKLAGTPAQINIAEIRKPELDAKLVADSIAQQLERRVMFRRAMKRAVQNAMRIGAQGIKVEVSGRLGGAEIARSEWYREGRVPLHTLRADIDYSTSESHTQYGVIGIKVWIFKGEVLDGMLPQIEEPKQQQPKRKPRGK</sequence>
<evidence type="ECO:0000255" key="1">
    <source>
        <dbReference type="HAMAP-Rule" id="MF_01309"/>
    </source>
</evidence>
<evidence type="ECO:0000305" key="2"/>
<name>RS3_SHEON</name>
<accession>P59183</accession>
<reference key="1">
    <citation type="journal article" date="2002" name="Nat. Biotechnol.">
        <title>Genome sequence of the dissimilatory metal ion-reducing bacterium Shewanella oneidensis.</title>
        <authorList>
            <person name="Heidelberg J.F."/>
            <person name="Paulsen I.T."/>
            <person name="Nelson K.E."/>
            <person name="Gaidos E.J."/>
            <person name="Nelson W.C."/>
            <person name="Read T.D."/>
            <person name="Eisen J.A."/>
            <person name="Seshadri R."/>
            <person name="Ward N.L."/>
            <person name="Methe B.A."/>
            <person name="Clayton R.A."/>
            <person name="Meyer T."/>
            <person name="Tsapin A."/>
            <person name="Scott J."/>
            <person name="Beanan M.J."/>
            <person name="Brinkac L.M."/>
            <person name="Daugherty S.C."/>
            <person name="DeBoy R.T."/>
            <person name="Dodson R.J."/>
            <person name="Durkin A.S."/>
            <person name="Haft D.H."/>
            <person name="Kolonay J.F."/>
            <person name="Madupu R."/>
            <person name="Peterson J.D."/>
            <person name="Umayam L.A."/>
            <person name="White O."/>
            <person name="Wolf A.M."/>
            <person name="Vamathevan J.J."/>
            <person name="Weidman J.F."/>
            <person name="Impraim M."/>
            <person name="Lee K."/>
            <person name="Berry K.J."/>
            <person name="Lee C."/>
            <person name="Mueller J."/>
            <person name="Khouri H.M."/>
            <person name="Gill J."/>
            <person name="Utterback T.R."/>
            <person name="McDonald L.A."/>
            <person name="Feldblyum T.V."/>
            <person name="Smith H.O."/>
            <person name="Venter J.C."/>
            <person name="Nealson K.H."/>
            <person name="Fraser C.M."/>
        </authorList>
    </citation>
    <scope>NUCLEOTIDE SEQUENCE [LARGE SCALE GENOMIC DNA]</scope>
    <source>
        <strain>ATCC 700550 / JCM 31522 / CIP 106686 / LMG 19005 / NCIMB 14063 / MR-1</strain>
    </source>
</reference>
<protein>
    <recommendedName>
        <fullName evidence="1">Small ribosomal subunit protein uS3</fullName>
    </recommendedName>
    <alternativeName>
        <fullName evidence="2">30S ribosomal protein S3</fullName>
    </alternativeName>
</protein>
<proteinExistence type="inferred from homology"/>
<gene>
    <name evidence="1" type="primary">rpsC</name>
    <name type="ordered locus">SO_0237</name>
</gene>
<dbReference type="EMBL" id="AE014299">
    <property type="protein sequence ID" value="AAN53322.1"/>
    <property type="molecule type" value="Genomic_DNA"/>
</dbReference>
<dbReference type="RefSeq" id="NP_715877.1">
    <property type="nucleotide sequence ID" value="NC_004347.2"/>
</dbReference>
<dbReference type="RefSeq" id="WP_011070621.1">
    <property type="nucleotide sequence ID" value="NZ_CP053946.1"/>
</dbReference>
<dbReference type="SMR" id="P59183"/>
<dbReference type="STRING" id="211586.SO_0237"/>
<dbReference type="PaxDb" id="211586-SO_0237"/>
<dbReference type="GeneID" id="94726192"/>
<dbReference type="KEGG" id="son:SO_0237"/>
<dbReference type="PATRIC" id="fig|211586.12.peg.225"/>
<dbReference type="eggNOG" id="COG0092">
    <property type="taxonomic scope" value="Bacteria"/>
</dbReference>
<dbReference type="HOGENOM" id="CLU_058591_0_2_6"/>
<dbReference type="OrthoDB" id="9806396at2"/>
<dbReference type="PhylomeDB" id="P59183"/>
<dbReference type="BioCyc" id="SONE211586:G1GMP-226-MONOMER"/>
<dbReference type="Proteomes" id="UP000008186">
    <property type="component" value="Chromosome"/>
</dbReference>
<dbReference type="GO" id="GO:0022627">
    <property type="term" value="C:cytosolic small ribosomal subunit"/>
    <property type="evidence" value="ECO:0000318"/>
    <property type="project" value="GO_Central"/>
</dbReference>
<dbReference type="GO" id="GO:0003729">
    <property type="term" value="F:mRNA binding"/>
    <property type="evidence" value="ECO:0007669"/>
    <property type="project" value="UniProtKB-UniRule"/>
</dbReference>
<dbReference type="GO" id="GO:0019843">
    <property type="term" value="F:rRNA binding"/>
    <property type="evidence" value="ECO:0007669"/>
    <property type="project" value="UniProtKB-UniRule"/>
</dbReference>
<dbReference type="GO" id="GO:0003735">
    <property type="term" value="F:structural constituent of ribosome"/>
    <property type="evidence" value="ECO:0000318"/>
    <property type="project" value="GO_Central"/>
</dbReference>
<dbReference type="GO" id="GO:0006412">
    <property type="term" value="P:translation"/>
    <property type="evidence" value="ECO:0007669"/>
    <property type="project" value="UniProtKB-UniRule"/>
</dbReference>
<dbReference type="CDD" id="cd02412">
    <property type="entry name" value="KH-II_30S_S3"/>
    <property type="match status" value="1"/>
</dbReference>
<dbReference type="FunFam" id="3.30.1140.32:FF:000001">
    <property type="entry name" value="30S ribosomal protein S3"/>
    <property type="match status" value="1"/>
</dbReference>
<dbReference type="FunFam" id="3.30.300.20:FF:000001">
    <property type="entry name" value="30S ribosomal protein S3"/>
    <property type="match status" value="1"/>
</dbReference>
<dbReference type="Gene3D" id="3.30.300.20">
    <property type="match status" value="1"/>
</dbReference>
<dbReference type="Gene3D" id="3.30.1140.32">
    <property type="entry name" value="Ribosomal protein S3, C-terminal domain"/>
    <property type="match status" value="1"/>
</dbReference>
<dbReference type="HAMAP" id="MF_01309_B">
    <property type="entry name" value="Ribosomal_uS3_B"/>
    <property type="match status" value="1"/>
</dbReference>
<dbReference type="InterPro" id="IPR004087">
    <property type="entry name" value="KH_dom"/>
</dbReference>
<dbReference type="InterPro" id="IPR015946">
    <property type="entry name" value="KH_dom-like_a/b"/>
</dbReference>
<dbReference type="InterPro" id="IPR004044">
    <property type="entry name" value="KH_dom_type_2"/>
</dbReference>
<dbReference type="InterPro" id="IPR009019">
    <property type="entry name" value="KH_sf_prok-type"/>
</dbReference>
<dbReference type="InterPro" id="IPR036419">
    <property type="entry name" value="Ribosomal_S3_C_sf"/>
</dbReference>
<dbReference type="InterPro" id="IPR005704">
    <property type="entry name" value="Ribosomal_uS3_bac-typ"/>
</dbReference>
<dbReference type="InterPro" id="IPR001351">
    <property type="entry name" value="Ribosomal_uS3_C"/>
</dbReference>
<dbReference type="InterPro" id="IPR018280">
    <property type="entry name" value="Ribosomal_uS3_CS"/>
</dbReference>
<dbReference type="NCBIfam" id="TIGR01009">
    <property type="entry name" value="rpsC_bact"/>
    <property type="match status" value="1"/>
</dbReference>
<dbReference type="PANTHER" id="PTHR11760">
    <property type="entry name" value="30S/40S RIBOSOMAL PROTEIN S3"/>
    <property type="match status" value="1"/>
</dbReference>
<dbReference type="PANTHER" id="PTHR11760:SF19">
    <property type="entry name" value="SMALL RIBOSOMAL SUBUNIT PROTEIN US3C"/>
    <property type="match status" value="1"/>
</dbReference>
<dbReference type="Pfam" id="PF07650">
    <property type="entry name" value="KH_2"/>
    <property type="match status" value="1"/>
</dbReference>
<dbReference type="Pfam" id="PF00189">
    <property type="entry name" value="Ribosomal_S3_C"/>
    <property type="match status" value="1"/>
</dbReference>
<dbReference type="SMART" id="SM00322">
    <property type="entry name" value="KH"/>
    <property type="match status" value="1"/>
</dbReference>
<dbReference type="SUPFAM" id="SSF54814">
    <property type="entry name" value="Prokaryotic type KH domain (KH-domain type II)"/>
    <property type="match status" value="1"/>
</dbReference>
<dbReference type="SUPFAM" id="SSF54821">
    <property type="entry name" value="Ribosomal protein S3 C-terminal domain"/>
    <property type="match status" value="1"/>
</dbReference>
<dbReference type="PROSITE" id="PS50823">
    <property type="entry name" value="KH_TYPE_2"/>
    <property type="match status" value="1"/>
</dbReference>
<dbReference type="PROSITE" id="PS00548">
    <property type="entry name" value="RIBOSOMAL_S3"/>
    <property type="match status" value="1"/>
</dbReference>